<comment type="function">
    <text evidence="2">Catalyzes the first step of diphthamide biosynthesis, a post-translational modification of histidine which occurs in elongation factor 2. DPH1 and DPH2 transfer a 3-amino-3-carboxypropyl (ACP) group from S-adenosyl-L-methionine (SAM) to a histidine residue, the reaction is assisted by a reduction system comprising DPH3 and a NADH-dependent reductase, predominantly CBR1.</text>
</comment>
<comment type="catalytic activity">
    <reaction evidence="2">
        <text>L-histidyl-[translation elongation factor 2] + S-adenosyl-L-methionine = 2-[(3S)-amino-3-carboxypropyl]-L-histidyl-[translation elongation factor 2] + S-methyl-5'-thioadenosine + H(+)</text>
        <dbReference type="Rhea" id="RHEA:36783"/>
        <dbReference type="Rhea" id="RHEA-COMP:9748"/>
        <dbReference type="Rhea" id="RHEA-COMP:9749"/>
        <dbReference type="ChEBI" id="CHEBI:15378"/>
        <dbReference type="ChEBI" id="CHEBI:17509"/>
        <dbReference type="ChEBI" id="CHEBI:29979"/>
        <dbReference type="ChEBI" id="CHEBI:59789"/>
        <dbReference type="ChEBI" id="CHEBI:73995"/>
        <dbReference type="EC" id="2.5.1.108"/>
    </reaction>
</comment>
<comment type="cofactor">
    <cofactor evidence="2">
        <name>[4Fe-4S] cluster</name>
        <dbReference type="ChEBI" id="CHEBI:49883"/>
    </cofactor>
    <text evidence="2">Binds 1 [4Fe-4S] cluster per subunit. The cluster is coordinated with 3 cysteines and an exchangeable S-adenosyl-L-methionine.</text>
</comment>
<comment type="pathway">
    <text>Protein modification; peptidyl-diphthamide biosynthesis.</text>
</comment>
<comment type="subunit">
    <text evidence="2">Component of the 2-(3-amino-3-carboxypropyl)histidine synthase complex composed of DPH1, DPH2, DPH3 and a NADH-dependent reductase, predominantly CBR1.</text>
</comment>
<comment type="subcellular location">
    <subcellularLocation>
        <location evidence="2">Cytoplasm</location>
    </subcellularLocation>
</comment>
<comment type="similarity">
    <text evidence="3">Belongs to the DPH1/DPH2 family. DPH1 subfamily.</text>
</comment>
<protein>
    <recommendedName>
        <fullName evidence="3">2-(3-amino-3-carboxypropyl)histidine synthase subunit 1</fullName>
        <ecNumber evidence="2">2.5.1.108</ecNumber>
    </recommendedName>
    <alternativeName>
        <fullName>Diphthamide biosynthesis protein 1</fullName>
    </alternativeName>
    <alternativeName>
        <fullName evidence="3">Diphtheria toxin resistance protein 1</fullName>
    </alternativeName>
    <alternativeName>
        <fullName evidence="3">S-adenosyl-L-methionine:L-histidine 3-amino-3-carboxypropyltransferase 1</fullName>
    </alternativeName>
</protein>
<organism>
    <name type="scientific">Debaryomyces hansenii (strain ATCC 36239 / CBS 767 / BCRC 21394 / JCM 1990 / NBRC 0083 / IGC 2968)</name>
    <name type="common">Yeast</name>
    <name type="synonym">Torulaspora hansenii</name>
    <dbReference type="NCBI Taxonomy" id="284592"/>
    <lineage>
        <taxon>Eukaryota</taxon>
        <taxon>Fungi</taxon>
        <taxon>Dikarya</taxon>
        <taxon>Ascomycota</taxon>
        <taxon>Saccharomycotina</taxon>
        <taxon>Pichiomycetes</taxon>
        <taxon>Debaryomycetaceae</taxon>
        <taxon>Debaryomyces</taxon>
    </lineage>
</organism>
<dbReference type="EC" id="2.5.1.108" evidence="2"/>
<dbReference type="EMBL" id="CR382137">
    <property type="protein sequence ID" value="CAG88014.2"/>
    <property type="molecule type" value="Genomic_DNA"/>
</dbReference>
<dbReference type="RefSeq" id="XP_459775.2">
    <property type="nucleotide sequence ID" value="XM_459775.1"/>
</dbReference>
<dbReference type="SMR" id="Q6BPU5"/>
<dbReference type="FunCoup" id="Q6BPU5">
    <property type="interactions" value="659"/>
</dbReference>
<dbReference type="STRING" id="284592.Q6BPU5"/>
<dbReference type="GeneID" id="2902153"/>
<dbReference type="KEGG" id="dha:DEHA2E10758g"/>
<dbReference type="VEuPathDB" id="FungiDB:DEHA2E10758g"/>
<dbReference type="eggNOG" id="KOG2648">
    <property type="taxonomic scope" value="Eukaryota"/>
</dbReference>
<dbReference type="HOGENOM" id="CLU_037146_1_1_1"/>
<dbReference type="InParanoid" id="Q6BPU5"/>
<dbReference type="OMA" id="PGQVLGC"/>
<dbReference type="OrthoDB" id="1649088at2759"/>
<dbReference type="UniPathway" id="UPA00559"/>
<dbReference type="Proteomes" id="UP000000599">
    <property type="component" value="Chromosome E"/>
</dbReference>
<dbReference type="GO" id="GO:0120513">
    <property type="term" value="C:2-(3-amino-3-carboxypropyl)histidine synthase complex"/>
    <property type="evidence" value="ECO:0000250"/>
    <property type="project" value="UniProtKB"/>
</dbReference>
<dbReference type="GO" id="GO:0005737">
    <property type="term" value="C:cytoplasm"/>
    <property type="evidence" value="ECO:0007669"/>
    <property type="project" value="UniProtKB-SubCell"/>
</dbReference>
<dbReference type="GO" id="GO:0090560">
    <property type="term" value="F:2-(3-amino-3-carboxypropyl)histidine synthase activity"/>
    <property type="evidence" value="ECO:0007669"/>
    <property type="project" value="UniProtKB-EC"/>
</dbReference>
<dbReference type="GO" id="GO:0051539">
    <property type="term" value="F:4 iron, 4 sulfur cluster binding"/>
    <property type="evidence" value="ECO:0000250"/>
    <property type="project" value="UniProtKB"/>
</dbReference>
<dbReference type="GO" id="GO:0046872">
    <property type="term" value="F:metal ion binding"/>
    <property type="evidence" value="ECO:0007669"/>
    <property type="project" value="UniProtKB-KW"/>
</dbReference>
<dbReference type="GO" id="GO:0017183">
    <property type="term" value="P:protein histidyl modification to diphthamide"/>
    <property type="evidence" value="ECO:0000250"/>
    <property type="project" value="UniProtKB"/>
</dbReference>
<dbReference type="FunFam" id="3.40.50.11840:FF:000001">
    <property type="entry name" value="2-(3-amino-3-carboxypropyl)histidine synthase subunit 1"/>
    <property type="match status" value="1"/>
</dbReference>
<dbReference type="FunFam" id="3.40.50.11850:FF:000001">
    <property type="entry name" value="2-(3-amino-3-carboxypropyl)histidine synthase subunit 1"/>
    <property type="match status" value="1"/>
</dbReference>
<dbReference type="FunFam" id="3.40.50.11860:FF:000002">
    <property type="entry name" value="2-(3-amino-3-carboxypropyl)histidine synthase subunit 1"/>
    <property type="match status" value="1"/>
</dbReference>
<dbReference type="Gene3D" id="3.40.50.11840">
    <property type="entry name" value="Diphthamide synthesis DPH1/DPH2 domain 1"/>
    <property type="match status" value="1"/>
</dbReference>
<dbReference type="Gene3D" id="3.40.50.11850">
    <property type="entry name" value="Diphthamide synthesis DPH1/DPH2 domain 2"/>
    <property type="match status" value="1"/>
</dbReference>
<dbReference type="Gene3D" id="3.40.50.11860">
    <property type="entry name" value="Diphthamide synthesis DPH1/DPH2 domain 3"/>
    <property type="match status" value="1"/>
</dbReference>
<dbReference type="InterPro" id="IPR016435">
    <property type="entry name" value="DPH1/DPH2"/>
</dbReference>
<dbReference type="InterPro" id="IPR042263">
    <property type="entry name" value="DPH1/DPH2_1"/>
</dbReference>
<dbReference type="InterPro" id="IPR042264">
    <property type="entry name" value="DPH1/DPH2_2"/>
</dbReference>
<dbReference type="InterPro" id="IPR042265">
    <property type="entry name" value="DPH1/DPH2_3"/>
</dbReference>
<dbReference type="InterPro" id="IPR035435">
    <property type="entry name" value="DPH1/DPH2_euk_archaea"/>
</dbReference>
<dbReference type="NCBIfam" id="TIGR00322">
    <property type="entry name" value="diphth2_R"/>
    <property type="match status" value="1"/>
</dbReference>
<dbReference type="PANTHER" id="PTHR10762:SF1">
    <property type="entry name" value="2-(3-AMINO-3-CARBOXYPROPYL)HISTIDINE SYNTHASE SUBUNIT 1"/>
    <property type="match status" value="1"/>
</dbReference>
<dbReference type="PANTHER" id="PTHR10762">
    <property type="entry name" value="DIPHTHAMIDE BIOSYNTHESIS PROTEIN"/>
    <property type="match status" value="1"/>
</dbReference>
<dbReference type="Pfam" id="PF01866">
    <property type="entry name" value="Diphthamide_syn"/>
    <property type="match status" value="1"/>
</dbReference>
<dbReference type="PIRSF" id="PIRSF004967">
    <property type="entry name" value="DPH1"/>
    <property type="match status" value="1"/>
</dbReference>
<dbReference type="SFLD" id="SFLDG01121">
    <property type="entry name" value="Diphthamide_biosynthesis"/>
    <property type="match status" value="1"/>
</dbReference>
<dbReference type="SFLD" id="SFLDS00032">
    <property type="entry name" value="Radical_SAM_3-amino-3-carboxyp"/>
    <property type="match status" value="1"/>
</dbReference>
<feature type="chain" id="PRO_0000083372" description="2-(3-amino-3-carboxypropyl)histidine synthase subunit 1">
    <location>
        <begin position="1"/>
        <end position="420"/>
    </location>
</feature>
<feature type="binding site" evidence="1">
    <location>
        <position position="127"/>
    </location>
    <ligand>
        <name>[4Fe-4S] cluster</name>
        <dbReference type="ChEBI" id="CHEBI:49883"/>
    </ligand>
</feature>
<feature type="binding site" evidence="1">
    <location>
        <position position="233"/>
    </location>
    <ligand>
        <name>[4Fe-4S] cluster</name>
        <dbReference type="ChEBI" id="CHEBI:49883"/>
    </ligand>
</feature>
<feature type="binding site" evidence="1">
    <location>
        <position position="362"/>
    </location>
    <ligand>
        <name>[4Fe-4S] cluster</name>
        <dbReference type="ChEBI" id="CHEBI:49883"/>
    </ligand>
</feature>
<reference key="1">
    <citation type="journal article" date="2004" name="Nature">
        <title>Genome evolution in yeasts.</title>
        <authorList>
            <person name="Dujon B."/>
            <person name="Sherman D."/>
            <person name="Fischer G."/>
            <person name="Durrens P."/>
            <person name="Casaregola S."/>
            <person name="Lafontaine I."/>
            <person name="de Montigny J."/>
            <person name="Marck C."/>
            <person name="Neuveglise C."/>
            <person name="Talla E."/>
            <person name="Goffard N."/>
            <person name="Frangeul L."/>
            <person name="Aigle M."/>
            <person name="Anthouard V."/>
            <person name="Babour A."/>
            <person name="Barbe V."/>
            <person name="Barnay S."/>
            <person name="Blanchin S."/>
            <person name="Beckerich J.-M."/>
            <person name="Beyne E."/>
            <person name="Bleykasten C."/>
            <person name="Boisrame A."/>
            <person name="Boyer J."/>
            <person name="Cattolico L."/>
            <person name="Confanioleri F."/>
            <person name="de Daruvar A."/>
            <person name="Despons L."/>
            <person name="Fabre E."/>
            <person name="Fairhead C."/>
            <person name="Ferry-Dumazet H."/>
            <person name="Groppi A."/>
            <person name="Hantraye F."/>
            <person name="Hennequin C."/>
            <person name="Jauniaux N."/>
            <person name="Joyet P."/>
            <person name="Kachouri R."/>
            <person name="Kerrest A."/>
            <person name="Koszul R."/>
            <person name="Lemaire M."/>
            <person name="Lesur I."/>
            <person name="Ma L."/>
            <person name="Muller H."/>
            <person name="Nicaud J.-M."/>
            <person name="Nikolski M."/>
            <person name="Oztas S."/>
            <person name="Ozier-Kalogeropoulos O."/>
            <person name="Pellenz S."/>
            <person name="Potier S."/>
            <person name="Richard G.-F."/>
            <person name="Straub M.-L."/>
            <person name="Suleau A."/>
            <person name="Swennen D."/>
            <person name="Tekaia F."/>
            <person name="Wesolowski-Louvel M."/>
            <person name="Westhof E."/>
            <person name="Wirth B."/>
            <person name="Zeniou-Meyer M."/>
            <person name="Zivanovic Y."/>
            <person name="Bolotin-Fukuhara M."/>
            <person name="Thierry A."/>
            <person name="Bouchier C."/>
            <person name="Caudron B."/>
            <person name="Scarpelli C."/>
            <person name="Gaillardin C."/>
            <person name="Weissenbach J."/>
            <person name="Wincker P."/>
            <person name="Souciet J.-L."/>
        </authorList>
    </citation>
    <scope>NUCLEOTIDE SEQUENCE [LARGE SCALE GENOMIC DNA]</scope>
    <source>
        <strain>ATCC 36239 / CBS 767 / BCRC 21394 / JCM 1990 / NBRC 0083 / IGC 2968</strain>
    </source>
</reference>
<sequence length="420" mass="47904">MEPKPEELEKKKVVRRKFIGKRSSVKGDEASLVKSANKTRHVGRVMNQIPQEILNDKDLNEAIRLLPSNYNFEIHKTVWNIKKNGAKRVALQMPEGLLIYSLIISDILEQFCEVETVVMGDVSYGACCIDDYTARALDCDFIVHYAHSCLVPIDITDIKVLYVFVTINIDEQHLINTIKLNFDKGSQLAVFGTIQFNPTIHSIKSKLENDEEKTMYLIPPQTMPLSKGEVLGCTSARLNKEQIKAMIYIGDGRFHLESSMIHNPEIPAYRYDPYSRKFTKEYYDQKQMIEVREDAVKIASNAKKIGLILGALGRQGNPVTLNNLETKLSAKGIQVVKIILSEIFPQKLSMFNDIDAFIQVACPRLSIDWGYAFNKPLLTPYEAMVMLENDTKWNETYYPMDYYSKEGYGRGKVPDHSNVI</sequence>
<keyword id="KW-0963">Cytoplasm</keyword>
<keyword id="KW-0408">Iron</keyword>
<keyword id="KW-0411">Iron-sulfur</keyword>
<keyword id="KW-0479">Metal-binding</keyword>
<keyword id="KW-1185">Reference proteome</keyword>
<keyword id="KW-0949">S-adenosyl-L-methionine</keyword>
<keyword id="KW-0808">Transferase</keyword>
<gene>
    <name type="primary">DPH1</name>
    <name type="ordered locus">DEHA2E10758g</name>
</gene>
<accession>Q6BPU5</accession>
<proteinExistence type="inferred from homology"/>
<name>DPH1_DEBHA</name>
<evidence type="ECO:0000250" key="1">
    <source>
        <dbReference type="UniProtKB" id="O58832"/>
    </source>
</evidence>
<evidence type="ECO:0000250" key="2">
    <source>
        <dbReference type="UniProtKB" id="P40487"/>
    </source>
</evidence>
<evidence type="ECO:0000305" key="3"/>